<dbReference type="EC" id="1.1.1.290" evidence="1"/>
<dbReference type="EMBL" id="CP000934">
    <property type="protein sequence ID" value="ACE83189.1"/>
    <property type="molecule type" value="Genomic_DNA"/>
</dbReference>
<dbReference type="RefSeq" id="WP_012487974.1">
    <property type="nucleotide sequence ID" value="NC_010995.1"/>
</dbReference>
<dbReference type="SMR" id="B3PK14"/>
<dbReference type="STRING" id="498211.CJA_2376"/>
<dbReference type="KEGG" id="cja:CJA_2376"/>
<dbReference type="eggNOG" id="COG0111">
    <property type="taxonomic scope" value="Bacteria"/>
</dbReference>
<dbReference type="HOGENOM" id="CLU_019796_4_0_6"/>
<dbReference type="OrthoDB" id="9770208at2"/>
<dbReference type="UniPathway" id="UPA00244">
    <property type="reaction ID" value="UER00310"/>
</dbReference>
<dbReference type="Proteomes" id="UP000001036">
    <property type="component" value="Chromosome"/>
</dbReference>
<dbReference type="GO" id="GO:0005829">
    <property type="term" value="C:cytosol"/>
    <property type="evidence" value="ECO:0007669"/>
    <property type="project" value="TreeGrafter"/>
</dbReference>
<dbReference type="GO" id="GO:0033711">
    <property type="term" value="F:4-phosphoerythronate dehydrogenase activity"/>
    <property type="evidence" value="ECO:0007669"/>
    <property type="project" value="UniProtKB-EC"/>
</dbReference>
<dbReference type="GO" id="GO:0051287">
    <property type="term" value="F:NAD binding"/>
    <property type="evidence" value="ECO:0007669"/>
    <property type="project" value="InterPro"/>
</dbReference>
<dbReference type="GO" id="GO:0046983">
    <property type="term" value="F:protein dimerization activity"/>
    <property type="evidence" value="ECO:0007669"/>
    <property type="project" value="InterPro"/>
</dbReference>
<dbReference type="GO" id="GO:0036001">
    <property type="term" value="P:'de novo' pyridoxal 5'-phosphate biosynthetic process"/>
    <property type="evidence" value="ECO:0007669"/>
    <property type="project" value="TreeGrafter"/>
</dbReference>
<dbReference type="GO" id="GO:0008615">
    <property type="term" value="P:pyridoxine biosynthetic process"/>
    <property type="evidence" value="ECO:0007669"/>
    <property type="project" value="UniProtKB-UniRule"/>
</dbReference>
<dbReference type="CDD" id="cd12158">
    <property type="entry name" value="ErythrP_dh"/>
    <property type="match status" value="1"/>
</dbReference>
<dbReference type="Gene3D" id="3.30.1370.170">
    <property type="match status" value="1"/>
</dbReference>
<dbReference type="Gene3D" id="3.40.50.720">
    <property type="entry name" value="NAD(P)-binding Rossmann-like Domain"/>
    <property type="match status" value="2"/>
</dbReference>
<dbReference type="HAMAP" id="MF_01825">
    <property type="entry name" value="PdxB"/>
    <property type="match status" value="1"/>
</dbReference>
<dbReference type="InterPro" id="IPR006139">
    <property type="entry name" value="D-isomer_2_OHA_DH_cat_dom"/>
</dbReference>
<dbReference type="InterPro" id="IPR029753">
    <property type="entry name" value="D-isomer_DH_CS"/>
</dbReference>
<dbReference type="InterPro" id="IPR006140">
    <property type="entry name" value="D-isomer_DH_NAD-bd"/>
</dbReference>
<dbReference type="InterPro" id="IPR020921">
    <property type="entry name" value="Erythronate-4-P_DHase"/>
</dbReference>
<dbReference type="InterPro" id="IPR024531">
    <property type="entry name" value="Erythronate-4-P_DHase_dimer"/>
</dbReference>
<dbReference type="InterPro" id="IPR036291">
    <property type="entry name" value="NAD(P)-bd_dom_sf"/>
</dbReference>
<dbReference type="InterPro" id="IPR038251">
    <property type="entry name" value="PdxB_dimer_sf"/>
</dbReference>
<dbReference type="NCBIfam" id="NF001309">
    <property type="entry name" value="PRK00257.1"/>
    <property type="match status" value="1"/>
</dbReference>
<dbReference type="PANTHER" id="PTHR42938">
    <property type="entry name" value="FORMATE DEHYDROGENASE 1"/>
    <property type="match status" value="1"/>
</dbReference>
<dbReference type="PANTHER" id="PTHR42938:SF9">
    <property type="entry name" value="FORMATE DEHYDROGENASE 1"/>
    <property type="match status" value="1"/>
</dbReference>
<dbReference type="Pfam" id="PF00389">
    <property type="entry name" value="2-Hacid_dh"/>
    <property type="match status" value="1"/>
</dbReference>
<dbReference type="Pfam" id="PF02826">
    <property type="entry name" value="2-Hacid_dh_C"/>
    <property type="match status" value="1"/>
</dbReference>
<dbReference type="Pfam" id="PF11890">
    <property type="entry name" value="DUF3410"/>
    <property type="match status" value="1"/>
</dbReference>
<dbReference type="SUPFAM" id="SSF52283">
    <property type="entry name" value="Formate/glycerate dehydrogenase catalytic domain-like"/>
    <property type="match status" value="1"/>
</dbReference>
<dbReference type="SUPFAM" id="SSF51735">
    <property type="entry name" value="NAD(P)-binding Rossmann-fold domains"/>
    <property type="match status" value="1"/>
</dbReference>
<dbReference type="PROSITE" id="PS00671">
    <property type="entry name" value="D_2_HYDROXYACID_DH_3"/>
    <property type="match status" value="1"/>
</dbReference>
<accession>B3PK14</accession>
<keyword id="KW-0963">Cytoplasm</keyword>
<keyword id="KW-0520">NAD</keyword>
<keyword id="KW-0560">Oxidoreductase</keyword>
<keyword id="KW-0664">Pyridoxine biosynthesis</keyword>
<keyword id="KW-1185">Reference proteome</keyword>
<gene>
    <name evidence="1" type="primary">pdxB</name>
    <name type="ordered locus">CJA_2376</name>
</gene>
<protein>
    <recommendedName>
        <fullName evidence="1">Erythronate-4-phosphate dehydrogenase</fullName>
        <ecNumber evidence="1">1.1.1.290</ecNumber>
    </recommendedName>
</protein>
<organism>
    <name type="scientific">Cellvibrio japonicus (strain Ueda107)</name>
    <name type="common">Pseudomonas fluorescens subsp. cellulosa</name>
    <dbReference type="NCBI Taxonomy" id="498211"/>
    <lineage>
        <taxon>Bacteria</taxon>
        <taxon>Pseudomonadati</taxon>
        <taxon>Pseudomonadota</taxon>
        <taxon>Gammaproteobacteria</taxon>
        <taxon>Cellvibrionales</taxon>
        <taxon>Cellvibrionaceae</taxon>
        <taxon>Cellvibrio</taxon>
    </lineage>
</organism>
<evidence type="ECO:0000255" key="1">
    <source>
        <dbReference type="HAMAP-Rule" id="MF_01825"/>
    </source>
</evidence>
<feature type="chain" id="PRO_1000188257" description="Erythronate-4-phosphate dehydrogenase">
    <location>
        <begin position="1"/>
        <end position="378"/>
    </location>
</feature>
<feature type="active site" evidence="1">
    <location>
        <position position="202"/>
    </location>
</feature>
<feature type="active site" evidence="1">
    <location>
        <position position="231"/>
    </location>
</feature>
<feature type="active site" description="Proton donor" evidence="1">
    <location>
        <position position="248"/>
    </location>
</feature>
<feature type="binding site" evidence="1">
    <location>
        <position position="45"/>
    </location>
    <ligand>
        <name>substrate</name>
    </ligand>
</feature>
<feature type="binding site" evidence="1">
    <location>
        <position position="66"/>
    </location>
    <ligand>
        <name>substrate</name>
    </ligand>
</feature>
<feature type="binding site" evidence="1">
    <location>
        <position position="142"/>
    </location>
    <ligand>
        <name>NAD(+)</name>
        <dbReference type="ChEBI" id="CHEBI:57540"/>
    </ligand>
</feature>
<feature type="binding site" evidence="1">
    <location>
        <position position="169"/>
    </location>
    <ligand>
        <name>NAD(+)</name>
        <dbReference type="ChEBI" id="CHEBI:57540"/>
    </ligand>
</feature>
<feature type="binding site" evidence="1">
    <location>
        <position position="226"/>
    </location>
    <ligand>
        <name>NAD(+)</name>
        <dbReference type="ChEBI" id="CHEBI:57540"/>
    </ligand>
</feature>
<feature type="binding site" evidence="1">
    <location>
        <position position="251"/>
    </location>
    <ligand>
        <name>NAD(+)</name>
        <dbReference type="ChEBI" id="CHEBI:57540"/>
    </ligand>
</feature>
<feature type="binding site" evidence="1">
    <location>
        <position position="252"/>
    </location>
    <ligand>
        <name>substrate</name>
    </ligand>
</feature>
<name>PDXB_CELJU</name>
<reference key="1">
    <citation type="journal article" date="2008" name="J. Bacteriol.">
        <title>Insights into plant cell wall degradation from the genome sequence of the soil bacterium Cellvibrio japonicus.</title>
        <authorList>
            <person name="DeBoy R.T."/>
            <person name="Mongodin E.F."/>
            <person name="Fouts D.E."/>
            <person name="Tailford L.E."/>
            <person name="Khouri H."/>
            <person name="Emerson J.B."/>
            <person name="Mohamoud Y."/>
            <person name="Watkins K."/>
            <person name="Henrissat B."/>
            <person name="Gilbert H.J."/>
            <person name="Nelson K.E."/>
        </authorList>
    </citation>
    <scope>NUCLEOTIDE SEQUENCE [LARGE SCALE GENOMIC DNA]</scope>
    <source>
        <strain>Ueda107</strain>
    </source>
</reference>
<comment type="function">
    <text evidence="1">Catalyzes the oxidation of erythronate-4-phosphate to 3-hydroxy-2-oxo-4-phosphonooxybutanoate.</text>
</comment>
<comment type="catalytic activity">
    <reaction evidence="1">
        <text>4-phospho-D-erythronate + NAD(+) = (R)-3-hydroxy-2-oxo-4-phosphooxybutanoate + NADH + H(+)</text>
        <dbReference type="Rhea" id="RHEA:18829"/>
        <dbReference type="ChEBI" id="CHEBI:15378"/>
        <dbReference type="ChEBI" id="CHEBI:57540"/>
        <dbReference type="ChEBI" id="CHEBI:57945"/>
        <dbReference type="ChEBI" id="CHEBI:58538"/>
        <dbReference type="ChEBI" id="CHEBI:58766"/>
        <dbReference type="EC" id="1.1.1.290"/>
    </reaction>
</comment>
<comment type="pathway">
    <text evidence="1">Cofactor biosynthesis; pyridoxine 5'-phosphate biosynthesis; pyridoxine 5'-phosphate from D-erythrose 4-phosphate: step 2/5.</text>
</comment>
<comment type="subunit">
    <text evidence="1">Homodimer.</text>
</comment>
<comment type="subcellular location">
    <subcellularLocation>
        <location evidence="1">Cytoplasm</location>
    </subcellularLocation>
</comment>
<comment type="similarity">
    <text evidence="1">Belongs to the D-isomer specific 2-hydroxyacid dehydrogenase family. PdxB subfamily.</text>
</comment>
<sequence>MKIVADENIPLVNEFFGHLGEITRLPGRSMTAEDVRAADVLIVRSVTPVNAALLEGSRVRFVGTCTIGVDHLDQAWLEQQGIAWSSAPGCNANSVVEYVYAALCHLDIHWLHGRFGIIGCGNVGGLLYRRLKAQGVDVRCYDPNLTLAQNPDLTSLEDVLACDFISMHTPLVTTGSYPSFHLVGERELAQLRPGAILINAGRGAVVDNQALLDCLRVRHDVRVVLDVWEPEPDISLELLNEVAIGSPHIAGYSYDGKLNGTAMIYQACCKHIGVAPQADLSELVPPLDDNLLDTAGLTQPWPLAKHLIKQVYDIAADDARLREQAQLACAGNSEFGAGFDHLRKHYPRRREFHNYQVRLSAQAEAARHWLTVLGFRCV</sequence>
<proteinExistence type="inferred from homology"/>